<name>Y1385_PYRHO</name>
<protein>
    <recommendedName>
        <fullName>Iron-sulfur cluster assembly SufBD family protein PH1385</fullName>
    </recommendedName>
</protein>
<accession>O50093</accession>
<comment type="similarity">
    <text evidence="1">Belongs to the iron-sulfur cluster assembly SufBD family.</text>
</comment>
<gene>
    <name type="ordered locus">PH1385</name>
</gene>
<reference key="1">
    <citation type="journal article" date="1998" name="DNA Res.">
        <title>Complete sequence and gene organization of the genome of a hyper-thermophilic archaebacterium, Pyrococcus horikoshii OT3.</title>
        <authorList>
            <person name="Kawarabayasi Y."/>
            <person name="Sawada M."/>
            <person name="Horikawa H."/>
            <person name="Haikawa Y."/>
            <person name="Hino Y."/>
            <person name="Yamamoto S."/>
            <person name="Sekine M."/>
            <person name="Baba S."/>
            <person name="Kosugi H."/>
            <person name="Hosoyama A."/>
            <person name="Nagai Y."/>
            <person name="Sakai M."/>
            <person name="Ogura K."/>
            <person name="Otsuka R."/>
            <person name="Nakazawa H."/>
            <person name="Takamiya M."/>
            <person name="Ohfuku Y."/>
            <person name="Funahashi T."/>
            <person name="Tanaka T."/>
            <person name="Kudoh Y."/>
            <person name="Yamazaki J."/>
            <person name="Kushida N."/>
            <person name="Oguchi A."/>
            <person name="Aoki K."/>
            <person name="Yoshizawa T."/>
            <person name="Nakamura Y."/>
            <person name="Robb F.T."/>
            <person name="Horikoshi K."/>
            <person name="Masuchi Y."/>
            <person name="Shizuya H."/>
            <person name="Kikuchi H."/>
        </authorList>
    </citation>
    <scope>NUCLEOTIDE SEQUENCE [LARGE SCALE GENOMIC DNA]</scope>
    <source>
        <strain>ATCC 700860 / DSM 12428 / JCM 9974 / NBRC 100139 / OT-3</strain>
    </source>
</reference>
<evidence type="ECO:0000305" key="1"/>
<sequence>MSETLTLSDAKSIIENQIEELAKRNKEPEWMTKIRYKALEEFMKAPLNDPVIDEETLLNFIAKPEIEGIPEKVESLDDLPPEMKDLLDRLGINEVEQKYIAGLAVQTDTGVIYNQFLQEWAKKGLIVLPTEEAVRRYPDIMKEHFLKLFKAGESKLTAYHIAIWNGGIFLYVKENLKVPFPLHLFFLIQESSLAQAPHITIIAEKNSEVHLIEGCTAPILVRHSLHLDMTEAYLHENAKVRLTVLQNWPEYVHTRPMTRAKVGRNAEFINTTVSLGAGKSNIANPKYWVGENGYVELNGVILGQKDWYIDLGGEMHLQGEGGRGINASKSVIMDESTVITRGKIVAEAKKTKGHISCDALLLSDKARMETYPGLVSLVDEAELSHEAAIGKIKEEELFYLMSRGLSEEKATQLIVKGFVEPMLKDIPIEFVVEIKKIIELAVSGGF</sequence>
<feature type="chain" id="PRO_0000147383" description="Iron-sulfur cluster assembly SufBD family protein PH1385">
    <location>
        <begin position="1"/>
        <end position="446"/>
    </location>
</feature>
<proteinExistence type="inferred from homology"/>
<dbReference type="EMBL" id="BA000001">
    <property type="protein sequence ID" value="BAA30491.1"/>
    <property type="molecule type" value="Genomic_DNA"/>
</dbReference>
<dbReference type="PIR" id="C71011">
    <property type="entry name" value="C71011"/>
</dbReference>
<dbReference type="RefSeq" id="WP_010885474.1">
    <property type="nucleotide sequence ID" value="NC_000961.1"/>
</dbReference>
<dbReference type="SMR" id="O50093"/>
<dbReference type="STRING" id="70601.gene:9378361"/>
<dbReference type="DNASU" id="1443712"/>
<dbReference type="EnsemblBacteria" id="BAA30491">
    <property type="protein sequence ID" value="BAA30491"/>
    <property type="gene ID" value="BAA30491"/>
</dbReference>
<dbReference type="GeneID" id="1443712"/>
<dbReference type="KEGG" id="pho:PH1385"/>
<dbReference type="eggNOG" id="arCOG01715">
    <property type="taxonomic scope" value="Archaea"/>
</dbReference>
<dbReference type="OrthoDB" id="372168at2157"/>
<dbReference type="Proteomes" id="UP000000752">
    <property type="component" value="Chromosome"/>
</dbReference>
<dbReference type="GO" id="GO:0016226">
    <property type="term" value="P:iron-sulfur cluster assembly"/>
    <property type="evidence" value="ECO:0007669"/>
    <property type="project" value="InterPro"/>
</dbReference>
<dbReference type="InterPro" id="IPR055346">
    <property type="entry name" value="Fe-S_cluster_assembly_SufBD"/>
</dbReference>
<dbReference type="InterPro" id="IPR010231">
    <property type="entry name" value="SUF_FeS_clus_asmbl_SufB"/>
</dbReference>
<dbReference type="InterPro" id="IPR000825">
    <property type="entry name" value="SUF_FeS_clus_asmbl_SufBD_core"/>
</dbReference>
<dbReference type="InterPro" id="IPR037284">
    <property type="entry name" value="SUF_FeS_clus_asmbl_SufBD_sf"/>
</dbReference>
<dbReference type="NCBIfam" id="TIGR01980">
    <property type="entry name" value="sufB"/>
    <property type="match status" value="1"/>
</dbReference>
<dbReference type="PANTHER" id="PTHR30508">
    <property type="entry name" value="FES CLUSTER ASSEMBLY PROTEIN SUF"/>
    <property type="match status" value="1"/>
</dbReference>
<dbReference type="PANTHER" id="PTHR30508:SF1">
    <property type="entry name" value="UPF0051 PROTEIN ABCI8, CHLOROPLASTIC-RELATED"/>
    <property type="match status" value="1"/>
</dbReference>
<dbReference type="Pfam" id="PF01458">
    <property type="entry name" value="SUFBD_core"/>
    <property type="match status" value="1"/>
</dbReference>
<dbReference type="SUPFAM" id="SSF101960">
    <property type="entry name" value="Stabilizer of iron transporter SufD"/>
    <property type="match status" value="1"/>
</dbReference>
<organism>
    <name type="scientific">Pyrococcus horikoshii (strain ATCC 700860 / DSM 12428 / JCM 9974 / NBRC 100139 / OT-3)</name>
    <dbReference type="NCBI Taxonomy" id="70601"/>
    <lineage>
        <taxon>Archaea</taxon>
        <taxon>Methanobacteriati</taxon>
        <taxon>Methanobacteriota</taxon>
        <taxon>Thermococci</taxon>
        <taxon>Thermococcales</taxon>
        <taxon>Thermococcaceae</taxon>
        <taxon>Pyrococcus</taxon>
    </lineage>
</organism>